<evidence type="ECO:0000250" key="1"/>
<evidence type="ECO:0000305" key="2"/>
<gene>
    <name type="primary">pncC</name>
    <name type="ordered locus">SF2723</name>
    <name type="ordered locus">S2914</name>
</gene>
<protein>
    <recommendedName>
        <fullName>Nicotinamide-nucleotide amidohydrolase PncC</fullName>
        <shortName>NMN amidohydrolase PncC</shortName>
        <ecNumber>3.5.1.42</ecNumber>
    </recommendedName>
    <alternativeName>
        <fullName>NMN deamidase</fullName>
    </alternativeName>
    <alternativeName>
        <fullName>Nicotinamide-nucleotide amidase</fullName>
    </alternativeName>
</protein>
<reference key="1">
    <citation type="journal article" date="2002" name="Nucleic Acids Res.">
        <title>Genome sequence of Shigella flexneri 2a: insights into pathogenicity through comparison with genomes of Escherichia coli K12 and O157.</title>
        <authorList>
            <person name="Jin Q."/>
            <person name="Yuan Z."/>
            <person name="Xu J."/>
            <person name="Wang Y."/>
            <person name="Shen Y."/>
            <person name="Lu W."/>
            <person name="Wang J."/>
            <person name="Liu H."/>
            <person name="Yang J."/>
            <person name="Yang F."/>
            <person name="Zhang X."/>
            <person name="Zhang J."/>
            <person name="Yang G."/>
            <person name="Wu H."/>
            <person name="Qu D."/>
            <person name="Dong J."/>
            <person name="Sun L."/>
            <person name="Xue Y."/>
            <person name="Zhao A."/>
            <person name="Gao Y."/>
            <person name="Zhu J."/>
            <person name="Kan B."/>
            <person name="Ding K."/>
            <person name="Chen S."/>
            <person name="Cheng H."/>
            <person name="Yao Z."/>
            <person name="He B."/>
            <person name="Chen R."/>
            <person name="Ma D."/>
            <person name="Qiang B."/>
            <person name="Wen Y."/>
            <person name="Hou Y."/>
            <person name="Yu J."/>
        </authorList>
    </citation>
    <scope>NUCLEOTIDE SEQUENCE [LARGE SCALE GENOMIC DNA]</scope>
    <source>
        <strain>301 / Serotype 2a</strain>
    </source>
</reference>
<reference key="2">
    <citation type="journal article" date="2003" name="Infect. Immun.">
        <title>Complete genome sequence and comparative genomics of Shigella flexneri serotype 2a strain 2457T.</title>
        <authorList>
            <person name="Wei J."/>
            <person name="Goldberg M.B."/>
            <person name="Burland V."/>
            <person name="Venkatesan M.M."/>
            <person name="Deng W."/>
            <person name="Fournier G."/>
            <person name="Mayhew G.F."/>
            <person name="Plunkett G. III"/>
            <person name="Rose D.J."/>
            <person name="Darling A."/>
            <person name="Mau B."/>
            <person name="Perna N.T."/>
            <person name="Payne S.M."/>
            <person name="Runyen-Janecky L.J."/>
            <person name="Zhou S."/>
            <person name="Schwartz D.C."/>
            <person name="Blattner F.R."/>
        </authorList>
    </citation>
    <scope>NUCLEOTIDE SEQUENCE [LARGE SCALE GENOMIC DNA]</scope>
    <source>
        <strain>ATCC 700930 / 2457T / Serotype 2a</strain>
    </source>
</reference>
<sequence length="165" mass="17612">MTDSELMQLSEQVGQALKARGATVTTAESCTGGWVAKVITDIAGSSAWFERGFVTYSNEAKAQMIGVREETLAQHGAVSEPVVVEMAIGALKAARADYAVSISGIAGPDGGSEEKPVGTVWFAFATARGEGITWRECFSGDRDAVRRQATAYALQTLWQQFLQNT</sequence>
<proteinExistence type="inferred from homology"/>
<organism>
    <name type="scientific">Shigella flexneri</name>
    <dbReference type="NCBI Taxonomy" id="623"/>
    <lineage>
        <taxon>Bacteria</taxon>
        <taxon>Pseudomonadati</taxon>
        <taxon>Pseudomonadota</taxon>
        <taxon>Gammaproteobacteria</taxon>
        <taxon>Enterobacterales</taxon>
        <taxon>Enterobacteriaceae</taxon>
        <taxon>Shigella</taxon>
    </lineage>
</organism>
<comment type="function">
    <text evidence="1">Has NMN aminohydrolase activity, not active on other substrates.</text>
</comment>
<comment type="catalytic activity">
    <reaction>
        <text>beta-nicotinamide D-ribonucleotide + H2O = nicotinate beta-D-ribonucleotide + NH4(+)</text>
        <dbReference type="Rhea" id="RHEA:12400"/>
        <dbReference type="ChEBI" id="CHEBI:14649"/>
        <dbReference type="ChEBI" id="CHEBI:15377"/>
        <dbReference type="ChEBI" id="CHEBI:28938"/>
        <dbReference type="ChEBI" id="CHEBI:57502"/>
        <dbReference type="EC" id="3.5.1.42"/>
    </reaction>
</comment>
<comment type="subunit">
    <text evidence="1">Homodimer.</text>
</comment>
<comment type="similarity">
    <text evidence="2">Belongs to the CinA family. PncC subfamily.</text>
</comment>
<name>PNCC_SHIFL</name>
<accession>Q83JZ0</accession>
<feature type="chain" id="PRO_0000156793" description="Nicotinamide-nucleotide amidohydrolase PncC">
    <location>
        <begin position="1"/>
        <end position="165"/>
    </location>
</feature>
<feature type="sequence conflict" description="In Ref. 2; AAP18041." evidence="2" ref="2">
    <original>W</original>
    <variation>R</variation>
    <location>
        <position position="134"/>
    </location>
</feature>
<keyword id="KW-0378">Hydrolase</keyword>
<keyword id="KW-0662">Pyridine nucleotide biosynthesis</keyword>
<keyword id="KW-1185">Reference proteome</keyword>
<dbReference type="EC" id="3.5.1.42"/>
<dbReference type="EMBL" id="AE005674">
    <property type="protein sequence ID" value="AAN44215.2"/>
    <property type="molecule type" value="Genomic_DNA"/>
</dbReference>
<dbReference type="EMBL" id="AE014073">
    <property type="protein sequence ID" value="AAP18041.1"/>
    <property type="molecule type" value="Genomic_DNA"/>
</dbReference>
<dbReference type="RefSeq" id="WP_011069484.1">
    <property type="nucleotide sequence ID" value="NZ_CP123365.1"/>
</dbReference>
<dbReference type="SMR" id="Q83JZ0"/>
<dbReference type="STRING" id="198214.SF2723"/>
<dbReference type="PaxDb" id="198214-SF2723"/>
<dbReference type="KEGG" id="sfl:SF2723"/>
<dbReference type="KEGG" id="sfx:S2914"/>
<dbReference type="PATRIC" id="fig|198214.7.peg.3243"/>
<dbReference type="HOGENOM" id="CLU_030805_1_1_6"/>
<dbReference type="Proteomes" id="UP000001006">
    <property type="component" value="Chromosome"/>
</dbReference>
<dbReference type="Proteomes" id="UP000002673">
    <property type="component" value="Chromosome"/>
</dbReference>
<dbReference type="GO" id="GO:0019159">
    <property type="term" value="F:nicotinamide-nucleotide amidase activity"/>
    <property type="evidence" value="ECO:0007669"/>
    <property type="project" value="UniProtKB-EC"/>
</dbReference>
<dbReference type="GO" id="GO:0019363">
    <property type="term" value="P:pyridine nucleotide biosynthetic process"/>
    <property type="evidence" value="ECO:0007669"/>
    <property type="project" value="UniProtKB-KW"/>
</dbReference>
<dbReference type="FunFam" id="3.90.950.20:FF:000001">
    <property type="entry name" value="Competence/damage-inducible domain protein CinA"/>
    <property type="match status" value="1"/>
</dbReference>
<dbReference type="Gene3D" id="3.90.950.20">
    <property type="entry name" value="CinA-like"/>
    <property type="match status" value="1"/>
</dbReference>
<dbReference type="InterPro" id="IPR036653">
    <property type="entry name" value="CinA-like_C"/>
</dbReference>
<dbReference type="InterPro" id="IPR008136">
    <property type="entry name" value="CinA_C"/>
</dbReference>
<dbReference type="NCBIfam" id="TIGR00199">
    <property type="entry name" value="PncC_domain"/>
    <property type="match status" value="1"/>
</dbReference>
<dbReference type="NCBIfam" id="NF002975">
    <property type="entry name" value="PRK03661.1"/>
    <property type="match status" value="1"/>
</dbReference>
<dbReference type="Pfam" id="PF02464">
    <property type="entry name" value="CinA"/>
    <property type="match status" value="1"/>
</dbReference>
<dbReference type="SUPFAM" id="SSF142433">
    <property type="entry name" value="CinA-like"/>
    <property type="match status" value="1"/>
</dbReference>